<reference key="1">
    <citation type="journal article" date="2005" name="Nature">
        <title>The map-based sequence of the rice genome.</title>
        <authorList>
            <consortium name="International rice genome sequencing project (IRGSP)"/>
        </authorList>
    </citation>
    <scope>NUCLEOTIDE SEQUENCE [LARGE SCALE GENOMIC DNA]</scope>
    <source>
        <strain>cv. Nipponbare</strain>
    </source>
</reference>
<reference key="2">
    <citation type="journal article" date="2008" name="Nucleic Acids Res.">
        <title>The rice annotation project database (RAP-DB): 2008 update.</title>
        <authorList>
            <consortium name="The rice annotation project (RAP)"/>
        </authorList>
    </citation>
    <scope>GENOME REANNOTATION</scope>
    <source>
        <strain>cv. Nipponbare</strain>
    </source>
</reference>
<reference key="3">
    <citation type="journal article" date="2013" name="Rice">
        <title>Improvement of the Oryza sativa Nipponbare reference genome using next generation sequence and optical map data.</title>
        <authorList>
            <person name="Kawahara Y."/>
            <person name="de la Bastide M."/>
            <person name="Hamilton J.P."/>
            <person name="Kanamori H."/>
            <person name="McCombie W.R."/>
            <person name="Ouyang S."/>
            <person name="Schwartz D.C."/>
            <person name="Tanaka T."/>
            <person name="Wu J."/>
            <person name="Zhou S."/>
            <person name="Childs K.L."/>
            <person name="Davidson R.M."/>
            <person name="Lin H."/>
            <person name="Quesada-Ocampo L."/>
            <person name="Vaillancourt B."/>
            <person name="Sakai H."/>
            <person name="Lee S.S."/>
            <person name="Kim J."/>
            <person name="Numa H."/>
            <person name="Itoh T."/>
            <person name="Buell C.R."/>
            <person name="Matsumoto T."/>
        </authorList>
    </citation>
    <scope>GENOME REANNOTATION</scope>
    <source>
        <strain>cv. Nipponbare</strain>
    </source>
</reference>
<reference key="4">
    <citation type="journal article" date="2005" name="PLoS Biol.">
        <title>The genomes of Oryza sativa: a history of duplications.</title>
        <authorList>
            <person name="Yu J."/>
            <person name="Wang J."/>
            <person name="Lin W."/>
            <person name="Li S."/>
            <person name="Li H."/>
            <person name="Zhou J."/>
            <person name="Ni P."/>
            <person name="Dong W."/>
            <person name="Hu S."/>
            <person name="Zeng C."/>
            <person name="Zhang J."/>
            <person name="Zhang Y."/>
            <person name="Li R."/>
            <person name="Xu Z."/>
            <person name="Li S."/>
            <person name="Li X."/>
            <person name="Zheng H."/>
            <person name="Cong L."/>
            <person name="Lin L."/>
            <person name="Yin J."/>
            <person name="Geng J."/>
            <person name="Li G."/>
            <person name="Shi J."/>
            <person name="Liu J."/>
            <person name="Lv H."/>
            <person name="Li J."/>
            <person name="Wang J."/>
            <person name="Deng Y."/>
            <person name="Ran L."/>
            <person name="Shi X."/>
            <person name="Wang X."/>
            <person name="Wu Q."/>
            <person name="Li C."/>
            <person name="Ren X."/>
            <person name="Wang J."/>
            <person name="Wang X."/>
            <person name="Li D."/>
            <person name="Liu D."/>
            <person name="Zhang X."/>
            <person name="Ji Z."/>
            <person name="Zhao W."/>
            <person name="Sun Y."/>
            <person name="Zhang Z."/>
            <person name="Bao J."/>
            <person name="Han Y."/>
            <person name="Dong L."/>
            <person name="Ji J."/>
            <person name="Chen P."/>
            <person name="Wu S."/>
            <person name="Liu J."/>
            <person name="Xiao Y."/>
            <person name="Bu D."/>
            <person name="Tan J."/>
            <person name="Yang L."/>
            <person name="Ye C."/>
            <person name="Zhang J."/>
            <person name="Xu J."/>
            <person name="Zhou Y."/>
            <person name="Yu Y."/>
            <person name="Zhang B."/>
            <person name="Zhuang S."/>
            <person name="Wei H."/>
            <person name="Liu B."/>
            <person name="Lei M."/>
            <person name="Yu H."/>
            <person name="Li Y."/>
            <person name="Xu H."/>
            <person name="Wei S."/>
            <person name="He X."/>
            <person name="Fang L."/>
            <person name="Zhang Z."/>
            <person name="Zhang Y."/>
            <person name="Huang X."/>
            <person name="Su Z."/>
            <person name="Tong W."/>
            <person name="Li J."/>
            <person name="Tong Z."/>
            <person name="Li S."/>
            <person name="Ye J."/>
            <person name="Wang L."/>
            <person name="Fang L."/>
            <person name="Lei T."/>
            <person name="Chen C.-S."/>
            <person name="Chen H.-C."/>
            <person name="Xu Z."/>
            <person name="Li H."/>
            <person name="Huang H."/>
            <person name="Zhang F."/>
            <person name="Xu H."/>
            <person name="Li N."/>
            <person name="Zhao C."/>
            <person name="Li S."/>
            <person name="Dong L."/>
            <person name="Huang Y."/>
            <person name="Li L."/>
            <person name="Xi Y."/>
            <person name="Qi Q."/>
            <person name="Li W."/>
            <person name="Zhang B."/>
            <person name="Hu W."/>
            <person name="Zhang Y."/>
            <person name="Tian X."/>
            <person name="Jiao Y."/>
            <person name="Liang X."/>
            <person name="Jin J."/>
            <person name="Gao L."/>
            <person name="Zheng W."/>
            <person name="Hao B."/>
            <person name="Liu S.-M."/>
            <person name="Wang W."/>
            <person name="Yuan L."/>
            <person name="Cao M."/>
            <person name="McDermott J."/>
            <person name="Samudrala R."/>
            <person name="Wang J."/>
            <person name="Wong G.K.-S."/>
            <person name="Yang H."/>
        </authorList>
    </citation>
    <scope>NUCLEOTIDE SEQUENCE [LARGE SCALE GENOMIC DNA]</scope>
    <source>
        <strain>cv. Nipponbare</strain>
    </source>
</reference>
<reference key="5">
    <citation type="journal article" date="2003" name="Science">
        <title>Collection, mapping, and annotation of over 28,000 cDNA clones from japonica rice.</title>
        <authorList>
            <consortium name="The rice full-length cDNA consortium"/>
        </authorList>
    </citation>
    <scope>NUCLEOTIDE SEQUENCE [LARGE SCALE MRNA]</scope>
    <source>
        <strain>cv. Nipponbare</strain>
    </source>
</reference>
<protein>
    <recommendedName>
        <fullName>Proteasome subunit alpha type-7-A</fullName>
    </recommendedName>
    <alternativeName>
        <fullName>20S proteasome alpha subunit D-1</fullName>
    </alternativeName>
    <alternativeName>
        <fullName>20S proteasome subunit alpha-4-A</fullName>
    </alternativeName>
</protein>
<feature type="chain" id="PRO_0000301664" description="Proteasome subunit alpha type-7-A">
    <location>
        <begin position="1"/>
        <end position="249"/>
    </location>
</feature>
<feature type="sequence conflict" description="In Ref. 5; AK061808." evidence="3" ref="5">
    <original>A</original>
    <variation>V</variation>
    <location>
        <position position="88"/>
    </location>
</feature>
<organism>
    <name type="scientific">Oryza sativa subsp. japonica</name>
    <name type="common">Rice</name>
    <dbReference type="NCBI Taxonomy" id="39947"/>
    <lineage>
        <taxon>Eukaryota</taxon>
        <taxon>Viridiplantae</taxon>
        <taxon>Streptophyta</taxon>
        <taxon>Embryophyta</taxon>
        <taxon>Tracheophyta</taxon>
        <taxon>Spermatophyta</taxon>
        <taxon>Magnoliopsida</taxon>
        <taxon>Liliopsida</taxon>
        <taxon>Poales</taxon>
        <taxon>Poaceae</taxon>
        <taxon>BOP clade</taxon>
        <taxon>Oryzoideae</taxon>
        <taxon>Oryzeae</taxon>
        <taxon>Oryzinae</taxon>
        <taxon>Oryza</taxon>
        <taxon>Oryza sativa</taxon>
    </lineage>
</organism>
<dbReference type="EMBL" id="AP003912">
    <property type="protein sequence ID" value="BAD08948.1"/>
    <property type="molecule type" value="Genomic_DNA"/>
</dbReference>
<dbReference type="EMBL" id="AP006265">
    <property type="protein sequence ID" value="BAD10760.1"/>
    <property type="molecule type" value="Genomic_DNA"/>
</dbReference>
<dbReference type="EMBL" id="AP008214">
    <property type="protein sequence ID" value="BAF24351.1"/>
    <property type="molecule type" value="Genomic_DNA"/>
</dbReference>
<dbReference type="EMBL" id="AP014964">
    <property type="protein sequence ID" value="BAT06571.1"/>
    <property type="molecule type" value="Genomic_DNA"/>
</dbReference>
<dbReference type="EMBL" id="CM000138">
    <property type="protein sequence ID" value="EEE54073.1"/>
    <property type="molecule type" value="Genomic_DNA"/>
</dbReference>
<dbReference type="EMBL" id="AK061808">
    <property type="status" value="NOT_ANNOTATED_CDS"/>
    <property type="molecule type" value="mRNA"/>
</dbReference>
<dbReference type="RefSeq" id="XP_015650855.1">
    <property type="nucleotide sequence ID" value="XM_015795369.1"/>
</dbReference>
<dbReference type="SMR" id="Q6YT00"/>
<dbReference type="FunCoup" id="Q6YT00">
    <property type="interactions" value="2656"/>
</dbReference>
<dbReference type="STRING" id="39947.Q6YT00"/>
<dbReference type="PaxDb" id="39947-Q6YT00"/>
<dbReference type="EnsemblPlants" id="Os08t0548900-01">
    <property type="protein sequence ID" value="Os08t0548900-01"/>
    <property type="gene ID" value="Os08g0548900"/>
</dbReference>
<dbReference type="Gramene" id="Os08t0548900-01">
    <property type="protein sequence ID" value="Os08t0548900-01"/>
    <property type="gene ID" value="Os08g0548900"/>
</dbReference>
<dbReference type="KEGG" id="dosa:Os08g0548900"/>
<dbReference type="eggNOG" id="KOG0183">
    <property type="taxonomic scope" value="Eukaryota"/>
</dbReference>
<dbReference type="HOGENOM" id="CLU_035750_4_0_1"/>
<dbReference type="InParanoid" id="Q6YT00"/>
<dbReference type="OMA" id="ICMLDHH"/>
<dbReference type="OrthoDB" id="431557at2759"/>
<dbReference type="Proteomes" id="UP000000763">
    <property type="component" value="Chromosome 8"/>
</dbReference>
<dbReference type="Proteomes" id="UP000007752">
    <property type="component" value="Chromosome 1"/>
</dbReference>
<dbReference type="Proteomes" id="UP000059680">
    <property type="component" value="Chromosome 8"/>
</dbReference>
<dbReference type="GO" id="GO:0005737">
    <property type="term" value="C:cytoplasm"/>
    <property type="evidence" value="ECO:0007669"/>
    <property type="project" value="UniProtKB-SubCell"/>
</dbReference>
<dbReference type="GO" id="GO:0005634">
    <property type="term" value="C:nucleus"/>
    <property type="evidence" value="ECO:0000318"/>
    <property type="project" value="GO_Central"/>
</dbReference>
<dbReference type="GO" id="GO:0019773">
    <property type="term" value="C:proteasome core complex, alpha-subunit complex"/>
    <property type="evidence" value="ECO:0000250"/>
    <property type="project" value="UniProtKB"/>
</dbReference>
<dbReference type="GO" id="GO:0043161">
    <property type="term" value="P:proteasome-mediated ubiquitin-dependent protein catabolic process"/>
    <property type="evidence" value="ECO:0000318"/>
    <property type="project" value="GO_Central"/>
</dbReference>
<dbReference type="CDD" id="cd03755">
    <property type="entry name" value="proteasome_alpha_type_7"/>
    <property type="match status" value="1"/>
</dbReference>
<dbReference type="FunFam" id="3.60.20.10:FF:000004">
    <property type="entry name" value="Proteasome subunit alpha type-4"/>
    <property type="match status" value="1"/>
</dbReference>
<dbReference type="Gene3D" id="3.60.20.10">
    <property type="entry name" value="Glutamine Phosphoribosylpyrophosphate, subunit 1, domain 1"/>
    <property type="match status" value="1"/>
</dbReference>
<dbReference type="InterPro" id="IPR029055">
    <property type="entry name" value="Ntn_hydrolases_N"/>
</dbReference>
<dbReference type="InterPro" id="IPR050115">
    <property type="entry name" value="Proteasome_alpha"/>
</dbReference>
<dbReference type="InterPro" id="IPR023332">
    <property type="entry name" value="Proteasome_alpha-type"/>
</dbReference>
<dbReference type="InterPro" id="IPR000426">
    <property type="entry name" value="Proteasome_asu_N"/>
</dbReference>
<dbReference type="InterPro" id="IPR001353">
    <property type="entry name" value="Proteasome_sua/b"/>
</dbReference>
<dbReference type="NCBIfam" id="NF003075">
    <property type="entry name" value="PRK03996.1"/>
    <property type="match status" value="1"/>
</dbReference>
<dbReference type="PANTHER" id="PTHR11599">
    <property type="entry name" value="PROTEASOME SUBUNIT ALPHA/BETA"/>
    <property type="match status" value="1"/>
</dbReference>
<dbReference type="Pfam" id="PF00227">
    <property type="entry name" value="Proteasome"/>
    <property type="match status" value="1"/>
</dbReference>
<dbReference type="Pfam" id="PF10584">
    <property type="entry name" value="Proteasome_A_N"/>
    <property type="match status" value="1"/>
</dbReference>
<dbReference type="SMART" id="SM00948">
    <property type="entry name" value="Proteasome_A_N"/>
    <property type="match status" value="1"/>
</dbReference>
<dbReference type="SUPFAM" id="SSF56235">
    <property type="entry name" value="N-terminal nucleophile aminohydrolases (Ntn hydrolases)"/>
    <property type="match status" value="1"/>
</dbReference>
<dbReference type="PROSITE" id="PS00388">
    <property type="entry name" value="PROTEASOME_ALPHA_1"/>
    <property type="match status" value="1"/>
</dbReference>
<dbReference type="PROSITE" id="PS51475">
    <property type="entry name" value="PROTEASOME_ALPHA_2"/>
    <property type="match status" value="1"/>
</dbReference>
<accession>Q6YT00</accession>
<accession>A2ZQE3</accession>
<accession>B9ETZ1</accession>
<keyword id="KW-0963">Cytoplasm</keyword>
<keyword id="KW-0539">Nucleus</keyword>
<keyword id="KW-0647">Proteasome</keyword>
<keyword id="KW-1185">Reference proteome</keyword>
<evidence type="ECO:0000250" key="1"/>
<evidence type="ECO:0000255" key="2">
    <source>
        <dbReference type="PROSITE-ProRule" id="PRU00808"/>
    </source>
</evidence>
<evidence type="ECO:0000305" key="3"/>
<evidence type="ECO:0000312" key="4">
    <source>
        <dbReference type="EMBL" id="EEE54073.1"/>
    </source>
</evidence>
<proteinExistence type="evidence at transcript level"/>
<name>PSA7A_ORYSJ</name>
<comment type="function">
    <text>The proteasome is a multicatalytic proteinase complex which is characterized by its ability to cleave peptides with Arg, Phe, Tyr, Leu, and Glu adjacent to the leaving group at neutral or slightly basic pH. The proteasome has an ATP-dependent proteolytic activity.</text>
</comment>
<comment type="subunit">
    <text>The 26S proteasome consists of a 20S proteasome core and two 19S regulatory subunits. The 20S proteasome core is composed of 28 subunits that are arranged in four stacked rings, resulting in a barrel-shaped structure. The two end rings are each formed by seven alpha subunits, and the two central rings are each formed by seven beta subunits. The catalytic chamber with the active sites is on the inside of the barrel.</text>
</comment>
<comment type="subcellular location">
    <subcellularLocation>
        <location evidence="1">Cytoplasm</location>
    </subcellularLocation>
    <subcellularLocation>
        <location evidence="1">Nucleus</location>
    </subcellularLocation>
</comment>
<comment type="similarity">
    <text evidence="2">Belongs to the peptidase T1A family.</text>
</comment>
<gene>
    <name type="ordered locus">Os08g0548900</name>
    <name type="ordered locus">LOC_Os08g43540</name>
    <name type="ORF">OJ1112_E06.28</name>
    <name type="ORF">OJ1479_B11.3</name>
    <name type="ORF">OsJ_000765</name>
    <name evidence="4" type="ORF">OsJ_00782</name>
</gene>
<sequence length="249" mass="27296">MARYDRAITVFSPDGHLFQVEYALEAVRKGNAAVGVRGTDTVVLGVEKKSTPKLQDSRSMRKIASLDTHIALACAGLKADARVLINRARVECQSHRLTVEDPVTVEYITRYIAGLQQKYTQSGGVRPFGLSTLIVGFDPYTEKPALYQTDPSGTFSAWKANATGRNSNSMREFLEKNYKDTSGKETIKLAIRALLEVVESGGKNIEIAVMTHKDGLRELEEAEIDEYVAEIEAEKAAAEAAKKGAPKET</sequence>